<name>PPNP_YERPG</name>
<reference key="1">
    <citation type="journal article" date="2010" name="J. Bacteriol.">
        <title>Genome sequence of the deep-rooted Yersinia pestis strain Angola reveals new insights into the evolution and pangenome of the plague bacterium.</title>
        <authorList>
            <person name="Eppinger M."/>
            <person name="Worsham P.L."/>
            <person name="Nikolich M.P."/>
            <person name="Riley D.R."/>
            <person name="Sebastian Y."/>
            <person name="Mou S."/>
            <person name="Achtman M."/>
            <person name="Lindler L.E."/>
            <person name="Ravel J."/>
        </authorList>
    </citation>
    <scope>NUCLEOTIDE SEQUENCE [LARGE SCALE GENOMIC DNA]</scope>
    <source>
        <strain>Angola</strain>
    </source>
</reference>
<sequence length="95" mass="10427">MLKFNEYFTGKVKSIGFDSDSIGPASVGVMEKGEYTFSTAKAEEMTVITGSLKVLIPGSPDWQTFMPGETFYIPGESEFNLQVAEASSYLCKYLS</sequence>
<accession>A9R2W2</accession>
<proteinExistence type="inferred from homology"/>
<organism>
    <name type="scientific">Yersinia pestis bv. Antiqua (strain Angola)</name>
    <dbReference type="NCBI Taxonomy" id="349746"/>
    <lineage>
        <taxon>Bacteria</taxon>
        <taxon>Pseudomonadati</taxon>
        <taxon>Pseudomonadota</taxon>
        <taxon>Gammaproteobacteria</taxon>
        <taxon>Enterobacterales</taxon>
        <taxon>Yersiniaceae</taxon>
        <taxon>Yersinia</taxon>
    </lineage>
</organism>
<protein>
    <recommendedName>
        <fullName evidence="1">Pyrimidine/purine nucleoside phosphorylase</fullName>
        <ecNumber evidence="1">2.4.2.1</ecNumber>
        <ecNumber evidence="1">2.4.2.2</ecNumber>
    </recommendedName>
    <alternativeName>
        <fullName evidence="1">Adenosine phosphorylase</fullName>
    </alternativeName>
    <alternativeName>
        <fullName evidence="1">Cytidine phosphorylase</fullName>
    </alternativeName>
    <alternativeName>
        <fullName evidence="1">Guanosine phosphorylase</fullName>
    </alternativeName>
    <alternativeName>
        <fullName evidence="1">Inosine phosphorylase</fullName>
    </alternativeName>
    <alternativeName>
        <fullName evidence="1">Thymidine phosphorylase</fullName>
    </alternativeName>
    <alternativeName>
        <fullName evidence="1">Uridine phosphorylase</fullName>
    </alternativeName>
    <alternativeName>
        <fullName evidence="1">Xanthosine phosphorylase</fullName>
    </alternativeName>
</protein>
<feature type="chain" id="PRO_1000198685" description="Pyrimidine/purine nucleoside phosphorylase">
    <location>
        <begin position="1"/>
        <end position="95"/>
    </location>
</feature>
<evidence type="ECO:0000255" key="1">
    <source>
        <dbReference type="HAMAP-Rule" id="MF_01537"/>
    </source>
</evidence>
<gene>
    <name evidence="1" type="primary">ppnP</name>
    <name type="ordered locus">YpAngola_A3292</name>
</gene>
<keyword id="KW-0328">Glycosyltransferase</keyword>
<keyword id="KW-0808">Transferase</keyword>
<comment type="function">
    <text evidence="1">Catalyzes the phosphorolysis of diverse nucleosides, yielding D-ribose 1-phosphate and the respective free bases. Can use uridine, adenosine, guanosine, cytidine, thymidine, inosine and xanthosine as substrates. Also catalyzes the reverse reactions.</text>
</comment>
<comment type="catalytic activity">
    <reaction evidence="1">
        <text>a purine D-ribonucleoside + phosphate = a purine nucleobase + alpha-D-ribose 1-phosphate</text>
        <dbReference type="Rhea" id="RHEA:19805"/>
        <dbReference type="ChEBI" id="CHEBI:26386"/>
        <dbReference type="ChEBI" id="CHEBI:43474"/>
        <dbReference type="ChEBI" id="CHEBI:57720"/>
        <dbReference type="ChEBI" id="CHEBI:142355"/>
        <dbReference type="EC" id="2.4.2.1"/>
    </reaction>
</comment>
<comment type="catalytic activity">
    <reaction evidence="1">
        <text>adenosine + phosphate = alpha-D-ribose 1-phosphate + adenine</text>
        <dbReference type="Rhea" id="RHEA:27642"/>
        <dbReference type="ChEBI" id="CHEBI:16335"/>
        <dbReference type="ChEBI" id="CHEBI:16708"/>
        <dbReference type="ChEBI" id="CHEBI:43474"/>
        <dbReference type="ChEBI" id="CHEBI:57720"/>
        <dbReference type="EC" id="2.4.2.1"/>
    </reaction>
</comment>
<comment type="catalytic activity">
    <reaction evidence="1">
        <text>cytidine + phosphate = cytosine + alpha-D-ribose 1-phosphate</text>
        <dbReference type="Rhea" id="RHEA:52540"/>
        <dbReference type="ChEBI" id="CHEBI:16040"/>
        <dbReference type="ChEBI" id="CHEBI:17562"/>
        <dbReference type="ChEBI" id="CHEBI:43474"/>
        <dbReference type="ChEBI" id="CHEBI:57720"/>
        <dbReference type="EC" id="2.4.2.2"/>
    </reaction>
</comment>
<comment type="catalytic activity">
    <reaction evidence="1">
        <text>guanosine + phosphate = alpha-D-ribose 1-phosphate + guanine</text>
        <dbReference type="Rhea" id="RHEA:13233"/>
        <dbReference type="ChEBI" id="CHEBI:16235"/>
        <dbReference type="ChEBI" id="CHEBI:16750"/>
        <dbReference type="ChEBI" id="CHEBI:43474"/>
        <dbReference type="ChEBI" id="CHEBI:57720"/>
        <dbReference type="EC" id="2.4.2.1"/>
    </reaction>
</comment>
<comment type="catalytic activity">
    <reaction evidence="1">
        <text>inosine + phosphate = alpha-D-ribose 1-phosphate + hypoxanthine</text>
        <dbReference type="Rhea" id="RHEA:27646"/>
        <dbReference type="ChEBI" id="CHEBI:17368"/>
        <dbReference type="ChEBI" id="CHEBI:17596"/>
        <dbReference type="ChEBI" id="CHEBI:43474"/>
        <dbReference type="ChEBI" id="CHEBI:57720"/>
        <dbReference type="EC" id="2.4.2.1"/>
    </reaction>
</comment>
<comment type="catalytic activity">
    <reaction evidence="1">
        <text>thymidine + phosphate = 2-deoxy-alpha-D-ribose 1-phosphate + thymine</text>
        <dbReference type="Rhea" id="RHEA:16037"/>
        <dbReference type="ChEBI" id="CHEBI:17748"/>
        <dbReference type="ChEBI" id="CHEBI:17821"/>
        <dbReference type="ChEBI" id="CHEBI:43474"/>
        <dbReference type="ChEBI" id="CHEBI:57259"/>
        <dbReference type="EC" id="2.4.2.2"/>
    </reaction>
</comment>
<comment type="catalytic activity">
    <reaction evidence="1">
        <text>uridine + phosphate = alpha-D-ribose 1-phosphate + uracil</text>
        <dbReference type="Rhea" id="RHEA:24388"/>
        <dbReference type="ChEBI" id="CHEBI:16704"/>
        <dbReference type="ChEBI" id="CHEBI:17568"/>
        <dbReference type="ChEBI" id="CHEBI:43474"/>
        <dbReference type="ChEBI" id="CHEBI:57720"/>
        <dbReference type="EC" id="2.4.2.2"/>
    </reaction>
</comment>
<comment type="catalytic activity">
    <reaction evidence="1">
        <text>xanthosine + phosphate = alpha-D-ribose 1-phosphate + xanthine</text>
        <dbReference type="Rhea" id="RHEA:27638"/>
        <dbReference type="ChEBI" id="CHEBI:17712"/>
        <dbReference type="ChEBI" id="CHEBI:18107"/>
        <dbReference type="ChEBI" id="CHEBI:43474"/>
        <dbReference type="ChEBI" id="CHEBI:57720"/>
        <dbReference type="EC" id="2.4.2.1"/>
    </reaction>
</comment>
<comment type="similarity">
    <text evidence="1">Belongs to the nucleoside phosphorylase PpnP family.</text>
</comment>
<dbReference type="EC" id="2.4.2.1" evidence="1"/>
<dbReference type="EC" id="2.4.2.2" evidence="1"/>
<dbReference type="EMBL" id="CP000901">
    <property type="protein sequence ID" value="ABX85572.1"/>
    <property type="molecule type" value="Genomic_DNA"/>
</dbReference>
<dbReference type="RefSeq" id="WP_002208692.1">
    <property type="nucleotide sequence ID" value="NZ_CP009935.1"/>
</dbReference>
<dbReference type="SMR" id="A9R2W2"/>
<dbReference type="GeneID" id="57975503"/>
<dbReference type="KEGG" id="ypg:YpAngola_A3292"/>
<dbReference type="PATRIC" id="fig|349746.12.peg.4358"/>
<dbReference type="GO" id="GO:0005829">
    <property type="term" value="C:cytosol"/>
    <property type="evidence" value="ECO:0007669"/>
    <property type="project" value="TreeGrafter"/>
</dbReference>
<dbReference type="GO" id="GO:0047975">
    <property type="term" value="F:guanosine phosphorylase activity"/>
    <property type="evidence" value="ECO:0007669"/>
    <property type="project" value="UniProtKB-EC"/>
</dbReference>
<dbReference type="GO" id="GO:0004731">
    <property type="term" value="F:purine-nucleoside phosphorylase activity"/>
    <property type="evidence" value="ECO:0007669"/>
    <property type="project" value="UniProtKB-UniRule"/>
</dbReference>
<dbReference type="GO" id="GO:0009032">
    <property type="term" value="F:thymidine phosphorylase activity"/>
    <property type="evidence" value="ECO:0007669"/>
    <property type="project" value="UniProtKB-EC"/>
</dbReference>
<dbReference type="GO" id="GO:0004850">
    <property type="term" value="F:uridine phosphorylase activity"/>
    <property type="evidence" value="ECO:0007669"/>
    <property type="project" value="UniProtKB-EC"/>
</dbReference>
<dbReference type="FunFam" id="2.60.120.10:FF:000016">
    <property type="entry name" value="Pyrimidine/purine nucleoside phosphorylase"/>
    <property type="match status" value="1"/>
</dbReference>
<dbReference type="Gene3D" id="2.60.120.10">
    <property type="entry name" value="Jelly Rolls"/>
    <property type="match status" value="1"/>
</dbReference>
<dbReference type="HAMAP" id="MF_01537">
    <property type="entry name" value="Nucleos_phosphorylase_PpnP"/>
    <property type="match status" value="1"/>
</dbReference>
<dbReference type="InterPro" id="IPR009664">
    <property type="entry name" value="Ppnp"/>
</dbReference>
<dbReference type="InterPro" id="IPR014710">
    <property type="entry name" value="RmlC-like_jellyroll"/>
</dbReference>
<dbReference type="InterPro" id="IPR011051">
    <property type="entry name" value="RmlC_Cupin_sf"/>
</dbReference>
<dbReference type="NCBIfam" id="NF007875">
    <property type="entry name" value="PRK10579.1"/>
    <property type="match status" value="1"/>
</dbReference>
<dbReference type="PANTHER" id="PTHR36540">
    <property type="entry name" value="PYRIMIDINE/PURINE NUCLEOSIDE PHOSPHORYLASE"/>
    <property type="match status" value="1"/>
</dbReference>
<dbReference type="PANTHER" id="PTHR36540:SF1">
    <property type="entry name" value="PYRIMIDINE_PURINE NUCLEOSIDE PHOSPHORYLASE"/>
    <property type="match status" value="1"/>
</dbReference>
<dbReference type="Pfam" id="PF06865">
    <property type="entry name" value="Ppnp"/>
    <property type="match status" value="1"/>
</dbReference>
<dbReference type="SUPFAM" id="SSF51182">
    <property type="entry name" value="RmlC-like cupins"/>
    <property type="match status" value="1"/>
</dbReference>